<accession>Q59ZX3</accession>
<accession>A0A1D8PFU5</accession>
<protein>
    <recommendedName>
        <fullName>Repressed by EFG1 protein 1</fullName>
    </recommendedName>
    <alternativeName>
        <fullName>PRY family cell wall protein 2</fullName>
    </alternativeName>
</protein>
<reference key="1">
    <citation type="journal article" date="2004" name="Proc. Natl. Acad. Sci. U.S.A.">
        <title>The diploid genome sequence of Candida albicans.</title>
        <authorList>
            <person name="Jones T."/>
            <person name="Federspiel N.A."/>
            <person name="Chibana H."/>
            <person name="Dungan J."/>
            <person name="Kalman S."/>
            <person name="Magee B.B."/>
            <person name="Newport G."/>
            <person name="Thorstenson Y.R."/>
            <person name="Agabian N."/>
            <person name="Magee P.T."/>
            <person name="Davis R.W."/>
            <person name="Scherer S."/>
        </authorList>
    </citation>
    <scope>NUCLEOTIDE SEQUENCE [LARGE SCALE GENOMIC DNA]</scope>
    <source>
        <strain>SC5314 / ATCC MYA-2876</strain>
    </source>
</reference>
<reference key="2">
    <citation type="journal article" date="2007" name="Genome Biol.">
        <title>Assembly of the Candida albicans genome into sixteen supercontigs aligned on the eight chromosomes.</title>
        <authorList>
            <person name="van het Hoog M."/>
            <person name="Rast T.J."/>
            <person name="Martchenko M."/>
            <person name="Grindle S."/>
            <person name="Dignard D."/>
            <person name="Hogues H."/>
            <person name="Cuomo C."/>
            <person name="Berriman M."/>
            <person name="Scherer S."/>
            <person name="Magee B.B."/>
            <person name="Whiteway M."/>
            <person name="Chibana H."/>
            <person name="Nantel A."/>
            <person name="Magee P.T."/>
        </authorList>
    </citation>
    <scope>GENOME REANNOTATION</scope>
    <source>
        <strain>SC5314 / ATCC MYA-2876</strain>
    </source>
</reference>
<reference key="3">
    <citation type="journal article" date="2013" name="Genome Biol.">
        <title>Assembly of a phased diploid Candida albicans genome facilitates allele-specific measurements and provides a simple model for repeat and indel structure.</title>
        <authorList>
            <person name="Muzzey D."/>
            <person name="Schwartz K."/>
            <person name="Weissman J.S."/>
            <person name="Sherlock G."/>
        </authorList>
    </citation>
    <scope>NUCLEOTIDE SEQUENCE [LARGE SCALE GENOMIC DNA]</scope>
    <scope>GENOME REANNOTATION</scope>
    <source>
        <strain>SC5314 / ATCC MYA-2876</strain>
    </source>
</reference>
<reference key="4">
    <citation type="journal article" date="2003" name="Mol. Microbiol.">
        <title>EFG1 is a major regulator of cell wall dynamics in Candida albicans as revealed by DNA microarrays.</title>
        <authorList>
            <person name="Sohn K."/>
            <person name="Urban C."/>
            <person name="Brunner H."/>
            <person name="Rupp S."/>
        </authorList>
    </citation>
    <scope>INDUCTION</scope>
</reference>
<reference key="5">
    <citation type="journal article" date="2004" name="Mol. Microbiol.">
        <title>Transcriptional profiling in Candida albicans reveals new adaptive responses to extracellular pH and functions for Rim101p.</title>
        <authorList>
            <person name="Bensen E.S."/>
            <person name="Martin S.J."/>
            <person name="Li M."/>
            <person name="Berman J."/>
            <person name="Davis D.A."/>
        </authorList>
    </citation>
    <scope>INDUCTION</scope>
</reference>
<reference key="6">
    <citation type="journal article" date="2005" name="Mol. Biol. Cell">
        <title>Global roles of Ssn6 in Tup1- and Nrg1-dependent gene regulation in the fungal pathogen, Candida albicans.</title>
        <authorList>
            <person name="Garcia-Sanchez S."/>
            <person name="Mavor A.L."/>
            <person name="Russell C.L."/>
            <person name="Argimon S."/>
            <person name="Dennison P."/>
            <person name="Enjalbert B."/>
            <person name="Brown A.J."/>
        </authorList>
    </citation>
    <scope>INDUCTION</scope>
</reference>
<reference key="7">
    <citation type="journal article" date="2010" name="Eukaryot. Cell">
        <title>Regulation of the hypoxic response in Candida albicans.</title>
        <authorList>
            <person name="Synnott J.M."/>
            <person name="Guida A."/>
            <person name="Mulhern-Haughey S."/>
            <person name="Higgins D.G."/>
            <person name="Butler G."/>
        </authorList>
    </citation>
    <scope>INDUCTION</scope>
</reference>
<reference key="8">
    <citation type="journal article" date="2010" name="J. Proteomics">
        <title>Identification of Candida albicans exposed surface proteins in vivo by a rapid proteomic approach.</title>
        <authorList>
            <person name="Hernaez M.L."/>
            <person name="Ximenez-Embun P."/>
            <person name="Martinez-Gomariz M."/>
            <person name="Gutierrez-Blazquez M.D."/>
            <person name="Nombela C."/>
            <person name="Gil C."/>
        </authorList>
    </citation>
    <scope>IDENTIFICATION BY MASS SPECTROMETRY</scope>
    <scope>SUBCELLULAR LOCATION</scope>
</reference>
<reference key="9">
    <citation type="journal article" date="2010" name="Yeast">
        <title>Mass spectrometric analysis of the secretome of Candida albicans.</title>
        <authorList>
            <person name="Sorgo A.G."/>
            <person name="Heilmann C.J."/>
            <person name="Dekker H.L."/>
            <person name="Brul S."/>
            <person name="de Koster C.G."/>
            <person name="Klis F.M."/>
        </authorList>
    </citation>
    <scope>IDENTIFICATION BY MASS SPECTROMETRY</scope>
    <scope>SUBCELLULAR LOCATION</scope>
    <scope>INDUCTION</scope>
</reference>
<reference key="10">
    <citation type="journal article" date="2011" name="Eukaryot. Cell">
        <title>Effects of fluconazole on the secretome, the wall proteome, and wall integrity of the clinical fungus Candida albicans.</title>
        <authorList>
            <person name="Sorgo A.G."/>
            <person name="Heilmann C.J."/>
            <person name="Dekker H.L."/>
            <person name="Bekker M."/>
            <person name="Brul S."/>
            <person name="de Koster C.G."/>
            <person name="de Koning L.J."/>
            <person name="Klis F.M."/>
        </authorList>
    </citation>
    <scope>IDENTIFICATION BY MASS SPECTROMETRY</scope>
    <scope>SUBCELLULAR LOCATION</scope>
    <scope>INDUCTION</scope>
</reference>
<reference key="11">
    <citation type="journal article" date="2011" name="Cell Host Microbe">
        <title>An iron homeostasis regulatory circuit with reciprocal roles in Candida albicans commensalism and pathogenesis.</title>
        <authorList>
            <person name="Chen C."/>
            <person name="Pande K."/>
            <person name="French S.D."/>
            <person name="Tuch B.B."/>
            <person name="Noble S.M."/>
        </authorList>
    </citation>
    <scope>INDUCTION</scope>
</reference>
<reference key="12">
    <citation type="journal article" date="2011" name="J. Biol. Chem.">
        <title>Cap2-HAP complex is a critical transcriptional regulator that has dual but contrasting roles in regulation of iron homeostasis in Candida albicans.</title>
        <authorList>
            <person name="Singh R.P."/>
            <person name="Prasad H.K."/>
            <person name="Sinha I."/>
            <person name="Agarwal N."/>
            <person name="Natarajan K."/>
        </authorList>
    </citation>
    <scope>INDUCTION</scope>
</reference>
<reference key="13">
    <citation type="journal article" date="2013" name="Mol. Microbiol.">
        <title>A family of secreted pathogenesis-related proteins in Candida albicans.</title>
        <authorList>
            <person name="Rohm M."/>
            <person name="Lindemann E."/>
            <person name="Hiller E."/>
            <person name="Ermert D."/>
            <person name="Lemuth K."/>
            <person name="Trkulja D."/>
            <person name="Sogukpinar O."/>
            <person name="Brunner H."/>
            <person name="Rupp S."/>
            <person name="Urban C.F."/>
            <person name="Sohn K."/>
        </authorList>
    </citation>
    <scope>IDENTIFICATION BY MASS SPECTROMETRY</scope>
    <scope>SUBCELLULAR LOCATION</scope>
    <scope>FUNCTION</scope>
    <scope>INDUCTION</scope>
</reference>
<sequence length="271" mass="29078">MKITNTLLNAAALLAVTEAATITKFFTASTQTLFVTQTSQTVVATKSFVETIYSAPPKQLTSKTQDSTSPTTSSVNSLTSSSATSYVETTTPAPSSSTLTTSTISSSTASEDSDATPTADVEFAEEILKEHNVKRALHGVPALSWSNKLAEYAQDYANTGFDCSNLNLKHSGGPYGENLAAGYMGGISPVDAWYDEISMVDWNNVDFTESTGHFTQLVWRSTTQVGCAKMMCSTAWRQITVCEYLPRGNVIGLNVTSGHSYFVDNVLPPLK</sequence>
<comment type="function">
    <text evidence="12">Cell wall protein involved in cell wall integrity and which plays a role in virulence.</text>
</comment>
<comment type="subcellular location">
    <subcellularLocation>
        <location evidence="6 7 10 12">Secreted</location>
        <location evidence="6 7 10 12">Cell wall</location>
    </subcellularLocation>
</comment>
<comment type="induction">
    <text evidence="3 4 5 7 8 9 10 11 12">Induced by ketoconazoland fluconazole; and repressed by EFG1, RIM101, SSN6, and alkaline conditions. Enriched in the media of yeast form-containing cultures. Expression is also regulated by HAP43, SEF1, and SFU1.</text>
</comment>
<comment type="similarity">
    <text evidence="13">Belongs to the CRISP family.</text>
</comment>
<organism>
    <name type="scientific">Candida albicans (strain SC5314 / ATCC MYA-2876)</name>
    <name type="common">Yeast</name>
    <dbReference type="NCBI Taxonomy" id="237561"/>
    <lineage>
        <taxon>Eukaryota</taxon>
        <taxon>Fungi</taxon>
        <taxon>Dikarya</taxon>
        <taxon>Ascomycota</taxon>
        <taxon>Saccharomycotina</taxon>
        <taxon>Pichiomycetes</taxon>
        <taxon>Debaryomycetaceae</taxon>
        <taxon>Candida/Lodderomyces clade</taxon>
        <taxon>Candida</taxon>
    </lineage>
</organism>
<feature type="signal peptide" evidence="1">
    <location>
        <begin position="1"/>
        <end position="19"/>
    </location>
</feature>
<feature type="chain" id="PRO_0000424913" description="Repressed by EFG1 protein 1">
    <location>
        <begin position="20"/>
        <end position="271"/>
    </location>
</feature>
<feature type="domain" description="SCP">
    <location>
        <begin position="128"/>
        <end position="244"/>
    </location>
</feature>
<feature type="region of interest" description="Disordered" evidence="2">
    <location>
        <begin position="59"/>
        <end position="118"/>
    </location>
</feature>
<feature type="compositionally biased region" description="Low complexity" evidence="2">
    <location>
        <begin position="67"/>
        <end position="118"/>
    </location>
</feature>
<feature type="glycosylation site" description="N-linked (GlcNAc...) asparagine" evidence="1">
    <location>
        <position position="254"/>
    </location>
</feature>
<gene>
    <name type="primary">RBE1</name>
    <name type="synonym">PRY2</name>
    <name type="ordered locus">CAALFM_C114120CA</name>
    <name type="ORF">CaO19.7218</name>
</gene>
<dbReference type="EMBL" id="CP017623">
    <property type="protein sequence ID" value="AOW27012.1"/>
    <property type="molecule type" value="Genomic_DNA"/>
</dbReference>
<dbReference type="RefSeq" id="XP_715019.1">
    <property type="nucleotide sequence ID" value="XM_709926.1"/>
</dbReference>
<dbReference type="SMR" id="Q59ZX3"/>
<dbReference type="STRING" id="237561.Q59ZX3"/>
<dbReference type="GlyCosmos" id="Q59ZX3">
    <property type="glycosylation" value="1 site, No reported glycans"/>
</dbReference>
<dbReference type="EnsemblFungi" id="C1_14120C_A-T">
    <property type="protein sequence ID" value="C1_14120C_A-T-p1"/>
    <property type="gene ID" value="C1_14120C_A"/>
</dbReference>
<dbReference type="GeneID" id="3643317"/>
<dbReference type="KEGG" id="cal:CAALFM_C114120CA"/>
<dbReference type="CGD" id="CAL0000190649">
    <property type="gene designation" value="RBE1"/>
</dbReference>
<dbReference type="VEuPathDB" id="FungiDB:C1_14120C_A"/>
<dbReference type="eggNOG" id="KOG3017">
    <property type="taxonomic scope" value="Eukaryota"/>
</dbReference>
<dbReference type="HOGENOM" id="CLU_035730_3_0_1"/>
<dbReference type="InParanoid" id="Q59ZX3"/>
<dbReference type="OMA" id="WRTINIV"/>
<dbReference type="OrthoDB" id="337038at2759"/>
<dbReference type="Proteomes" id="UP000000559">
    <property type="component" value="Chromosome 1"/>
</dbReference>
<dbReference type="GO" id="GO:0009986">
    <property type="term" value="C:cell surface"/>
    <property type="evidence" value="ECO:0000314"/>
    <property type="project" value="CGD"/>
</dbReference>
<dbReference type="GO" id="GO:0005576">
    <property type="term" value="C:extracellular region"/>
    <property type="evidence" value="ECO:0000314"/>
    <property type="project" value="CGD"/>
</dbReference>
<dbReference type="GO" id="GO:0005615">
    <property type="term" value="C:extracellular space"/>
    <property type="evidence" value="ECO:0000318"/>
    <property type="project" value="GO_Central"/>
</dbReference>
<dbReference type="GO" id="GO:1903561">
    <property type="term" value="C:extracellular vesicle"/>
    <property type="evidence" value="ECO:0000314"/>
    <property type="project" value="CGD"/>
</dbReference>
<dbReference type="GO" id="GO:0030445">
    <property type="term" value="C:yeast-form cell wall"/>
    <property type="evidence" value="ECO:0000314"/>
    <property type="project" value="CGD"/>
</dbReference>
<dbReference type="GO" id="GO:0015485">
    <property type="term" value="F:cholesterol binding"/>
    <property type="evidence" value="ECO:0000314"/>
    <property type="project" value="CGD"/>
</dbReference>
<dbReference type="GO" id="GO:0071555">
    <property type="term" value="P:cell wall organization"/>
    <property type="evidence" value="ECO:0007669"/>
    <property type="project" value="UniProtKB-KW"/>
</dbReference>
<dbReference type="GO" id="GO:0019953">
    <property type="term" value="P:sexual reproduction"/>
    <property type="evidence" value="ECO:0000318"/>
    <property type="project" value="GO_Central"/>
</dbReference>
<dbReference type="CDD" id="cd05384">
    <property type="entry name" value="CAP_PRY1-like"/>
    <property type="match status" value="1"/>
</dbReference>
<dbReference type="FunFam" id="3.40.33.10:FF:000012">
    <property type="entry name" value="Secreted protein PRY1"/>
    <property type="match status" value="1"/>
</dbReference>
<dbReference type="Gene3D" id="3.40.33.10">
    <property type="entry name" value="CAP"/>
    <property type="match status" value="1"/>
</dbReference>
<dbReference type="InterPro" id="IPR018244">
    <property type="entry name" value="Allrgn_V5/Tpx1_CS"/>
</dbReference>
<dbReference type="InterPro" id="IPR014044">
    <property type="entry name" value="CAP_dom"/>
</dbReference>
<dbReference type="InterPro" id="IPR035940">
    <property type="entry name" value="CAP_sf"/>
</dbReference>
<dbReference type="InterPro" id="IPR001283">
    <property type="entry name" value="CRISP-related"/>
</dbReference>
<dbReference type="PANTHER" id="PTHR10334">
    <property type="entry name" value="CYSTEINE-RICH SECRETORY PROTEIN-RELATED"/>
    <property type="match status" value="1"/>
</dbReference>
<dbReference type="Pfam" id="PF00188">
    <property type="entry name" value="CAP"/>
    <property type="match status" value="1"/>
</dbReference>
<dbReference type="PRINTS" id="PR00837">
    <property type="entry name" value="V5TPXLIKE"/>
</dbReference>
<dbReference type="SMART" id="SM00198">
    <property type="entry name" value="SCP"/>
    <property type="match status" value="1"/>
</dbReference>
<dbReference type="SUPFAM" id="SSF55797">
    <property type="entry name" value="PR-1-like"/>
    <property type="match status" value="1"/>
</dbReference>
<dbReference type="PROSITE" id="PS01009">
    <property type="entry name" value="CRISP_1"/>
    <property type="match status" value="1"/>
</dbReference>
<proteinExistence type="evidence at protein level"/>
<keyword id="KW-0134">Cell wall</keyword>
<keyword id="KW-0961">Cell wall biogenesis/degradation</keyword>
<keyword id="KW-0325">Glycoprotein</keyword>
<keyword id="KW-1185">Reference proteome</keyword>
<keyword id="KW-0964">Secreted</keyword>
<keyword id="KW-0732">Signal</keyword>
<keyword id="KW-0843">Virulence</keyword>
<evidence type="ECO:0000255" key="1"/>
<evidence type="ECO:0000256" key="2">
    <source>
        <dbReference type="SAM" id="MobiDB-lite"/>
    </source>
</evidence>
<evidence type="ECO:0000269" key="3">
    <source>
    </source>
</evidence>
<evidence type="ECO:0000269" key="4">
    <source>
    </source>
</evidence>
<evidence type="ECO:0000269" key="5">
    <source>
    </source>
</evidence>
<evidence type="ECO:0000269" key="6">
    <source>
    </source>
</evidence>
<evidence type="ECO:0000269" key="7">
    <source>
    </source>
</evidence>
<evidence type="ECO:0000269" key="8">
    <source>
    </source>
</evidence>
<evidence type="ECO:0000269" key="9">
    <source>
    </source>
</evidence>
<evidence type="ECO:0000269" key="10">
    <source>
    </source>
</evidence>
<evidence type="ECO:0000269" key="11">
    <source>
    </source>
</evidence>
<evidence type="ECO:0000269" key="12">
    <source>
    </source>
</evidence>
<evidence type="ECO:0000305" key="13"/>
<name>RBE1_CANAL</name>